<sequence length="371" mass="40446">MKIDSWLNDRLDIAKEAGVHRNLRSMNGAPVPERNIDGENQTVWSSNNYLGLASDRRLIDAAQTALQQFGTGSSGSRLTTGNSVWHEKLEKKIASFKRTEAALLFSSGYLANVGVLSSLPEKEDVILSDQLNHASIIDGCRLSKADTVVYRHIDMNDLENKLNETQRYQRRFIVTDGVFSMDGTIVPLDQIISLAKRYHAFVVVDDAHATGVLGDSGRGTSEYFGVYPDIVIGTLSKAVGTEGGFAAGSAVFIDFLLNHARTFIFQTAIPPASCAAAHEAFNIRTSLKNMGYVVKGDHTPIIPVVIGDAHKTVIFAEKLQGKGIYAPAIRPPTVAPGESRIRITITSDHSMGDIDDLLKTFHSIGKELHII</sequence>
<accession>Q8KZM9</accession>
<name>BIOF_BACNA</name>
<keyword id="KW-0093">Biotin biosynthesis</keyword>
<keyword id="KW-0663">Pyridoxal phosphate</keyword>
<keyword id="KW-0808">Transferase</keyword>
<protein>
    <recommendedName>
        <fullName>Putative 8-amino-7-oxononanoate synthase</fullName>
        <shortName>AONS</shortName>
        <ecNumber>2.3.1.47</ecNumber>
    </recommendedName>
    <alternativeName>
        <fullName>7-keto-8-amino-pelargonic acid synthase</fullName>
        <shortName>7-KAP synthase</shortName>
    </alternativeName>
    <alternativeName>
        <fullName>8-amino-7-ketopelargonate synthase</fullName>
    </alternativeName>
</protein>
<comment type="function">
    <text evidence="1">Catalyzes the decarboxylative condensation of pimeloyl-[acyl-carrier protein] and L-alanine to produce 8-amino-7-oxononanoate (AON), [acyl-carrier protein], and carbon dioxide.</text>
</comment>
<comment type="catalytic activity">
    <reaction>
        <text>6-carboxyhexanoyl-[ACP] + L-alanine + H(+) = (8S)-8-amino-7-oxononanoate + holo-[ACP] + CO2</text>
        <dbReference type="Rhea" id="RHEA:42288"/>
        <dbReference type="Rhea" id="RHEA-COMP:9685"/>
        <dbReference type="Rhea" id="RHEA-COMP:9955"/>
        <dbReference type="ChEBI" id="CHEBI:15378"/>
        <dbReference type="ChEBI" id="CHEBI:16526"/>
        <dbReference type="ChEBI" id="CHEBI:57972"/>
        <dbReference type="ChEBI" id="CHEBI:64479"/>
        <dbReference type="ChEBI" id="CHEBI:78846"/>
        <dbReference type="ChEBI" id="CHEBI:149468"/>
        <dbReference type="EC" id="2.3.1.47"/>
    </reaction>
</comment>
<comment type="cofactor">
    <cofactor evidence="1">
        <name>pyridoxal 5'-phosphate</name>
        <dbReference type="ChEBI" id="CHEBI:597326"/>
    </cofactor>
</comment>
<comment type="pathway">
    <text>Cofactor biosynthesis; biotin biosynthesis.</text>
</comment>
<comment type="subunit">
    <text evidence="1">Homodimer.</text>
</comment>
<comment type="similarity">
    <text evidence="2">Belongs to the class-II pyridoxal-phosphate-dependent aminotransferase family. BioF subfamily.</text>
</comment>
<organism>
    <name type="scientific">Bacillus subtilis subsp. natto</name>
    <dbReference type="NCBI Taxonomy" id="86029"/>
    <lineage>
        <taxon>Bacteria</taxon>
        <taxon>Bacillati</taxon>
        <taxon>Bacillota</taxon>
        <taxon>Bacilli</taxon>
        <taxon>Bacillales</taxon>
        <taxon>Bacillaceae</taxon>
        <taxon>Bacillus</taxon>
    </lineage>
</organism>
<evidence type="ECO:0000250" key="1"/>
<evidence type="ECO:0000305" key="2"/>
<proteinExistence type="inferred from homology"/>
<reference key="1">
    <citation type="journal article" date="2004" name="Biosci. Biotechnol. Biochem.">
        <title>Genetic analysis of an incomplete bio operon in a biotin auxotrophic strain of Bacillus subtilis natto OK2.</title>
        <authorList>
            <person name="Sasaki M."/>
            <person name="Kawamura F."/>
            <person name="Kurusu Y."/>
        </authorList>
    </citation>
    <scope>NUCLEOTIDE SEQUENCE [GENOMIC DNA]</scope>
    <scope>BIOTIN AUXOTROPHY</scope>
    <source>
        <strain>OK2</strain>
    </source>
</reference>
<feature type="chain" id="PRO_0000380919" description="Putative 8-amino-7-oxononanoate synthase">
    <location>
        <begin position="1"/>
        <end position="371"/>
    </location>
</feature>
<feature type="binding site" evidence="1">
    <location>
        <position position="21"/>
    </location>
    <ligand>
        <name>substrate</name>
    </ligand>
</feature>
<feature type="binding site" evidence="1">
    <location>
        <begin position="108"/>
        <end position="109"/>
    </location>
    <ligand>
        <name>pyridoxal 5'-phosphate</name>
        <dbReference type="ChEBI" id="CHEBI:597326"/>
    </ligand>
</feature>
<feature type="binding site" evidence="1">
    <location>
        <position position="133"/>
    </location>
    <ligand>
        <name>substrate</name>
    </ligand>
</feature>
<feature type="binding site" evidence="1">
    <location>
        <position position="180"/>
    </location>
    <ligand>
        <name>pyridoxal 5'-phosphate</name>
        <dbReference type="ChEBI" id="CHEBI:597326"/>
    </ligand>
</feature>
<feature type="binding site" evidence="1">
    <location>
        <begin position="205"/>
        <end position="208"/>
    </location>
    <ligand>
        <name>pyridoxal 5'-phosphate</name>
        <dbReference type="ChEBI" id="CHEBI:597326"/>
    </ligand>
</feature>
<feature type="binding site" evidence="1">
    <location>
        <begin position="234"/>
        <end position="237"/>
    </location>
    <ligand>
        <name>pyridoxal 5'-phosphate</name>
        <dbReference type="ChEBI" id="CHEBI:597326"/>
    </ligand>
</feature>
<feature type="binding site" evidence="1">
    <location>
        <position position="333"/>
    </location>
    <ligand>
        <name>substrate</name>
    </ligand>
</feature>
<feature type="modified residue" description="N6-(pyridoxal phosphate)lysine" evidence="1">
    <location>
        <position position="237"/>
    </location>
</feature>
<dbReference type="EC" id="2.3.1.47"/>
<dbReference type="EMBL" id="AB088066">
    <property type="protein sequence ID" value="BAC03241.1"/>
    <property type="molecule type" value="Genomic_DNA"/>
</dbReference>
<dbReference type="SMR" id="Q8KZM9"/>
<dbReference type="UniPathway" id="UPA00078"/>
<dbReference type="GO" id="GO:0008710">
    <property type="term" value="F:8-amino-7-oxononanoate synthase activity"/>
    <property type="evidence" value="ECO:0007669"/>
    <property type="project" value="UniProtKB-EC"/>
</dbReference>
<dbReference type="GO" id="GO:0030170">
    <property type="term" value="F:pyridoxal phosphate binding"/>
    <property type="evidence" value="ECO:0007669"/>
    <property type="project" value="InterPro"/>
</dbReference>
<dbReference type="GO" id="GO:0009102">
    <property type="term" value="P:biotin biosynthetic process"/>
    <property type="evidence" value="ECO:0007669"/>
    <property type="project" value="UniProtKB-UniPathway"/>
</dbReference>
<dbReference type="CDD" id="cd06454">
    <property type="entry name" value="KBL_like"/>
    <property type="match status" value="1"/>
</dbReference>
<dbReference type="Gene3D" id="3.90.1150.10">
    <property type="entry name" value="Aspartate Aminotransferase, domain 1"/>
    <property type="match status" value="1"/>
</dbReference>
<dbReference type="Gene3D" id="3.40.640.10">
    <property type="entry name" value="Type I PLP-dependent aspartate aminotransferase-like (Major domain)"/>
    <property type="match status" value="1"/>
</dbReference>
<dbReference type="InterPro" id="IPR001917">
    <property type="entry name" value="Aminotrans_II_pyridoxalP_BS"/>
</dbReference>
<dbReference type="InterPro" id="IPR004839">
    <property type="entry name" value="Aminotransferase_I/II_large"/>
</dbReference>
<dbReference type="InterPro" id="IPR050087">
    <property type="entry name" value="AON_synthase_class-II"/>
</dbReference>
<dbReference type="InterPro" id="IPR004723">
    <property type="entry name" value="AONS_Archaea/Proteobacteria"/>
</dbReference>
<dbReference type="InterPro" id="IPR015424">
    <property type="entry name" value="PyrdxlP-dep_Trfase"/>
</dbReference>
<dbReference type="InterPro" id="IPR015421">
    <property type="entry name" value="PyrdxlP-dep_Trfase_major"/>
</dbReference>
<dbReference type="InterPro" id="IPR015422">
    <property type="entry name" value="PyrdxlP-dep_Trfase_small"/>
</dbReference>
<dbReference type="NCBIfam" id="TIGR00858">
    <property type="entry name" value="bioF"/>
    <property type="match status" value="1"/>
</dbReference>
<dbReference type="PANTHER" id="PTHR13693">
    <property type="entry name" value="CLASS II AMINOTRANSFERASE/8-AMINO-7-OXONONANOATE SYNTHASE"/>
    <property type="match status" value="1"/>
</dbReference>
<dbReference type="PANTHER" id="PTHR13693:SF3">
    <property type="entry name" value="LD36009P"/>
    <property type="match status" value="1"/>
</dbReference>
<dbReference type="Pfam" id="PF00155">
    <property type="entry name" value="Aminotran_1_2"/>
    <property type="match status" value="1"/>
</dbReference>
<dbReference type="SUPFAM" id="SSF53383">
    <property type="entry name" value="PLP-dependent transferases"/>
    <property type="match status" value="1"/>
</dbReference>
<dbReference type="PROSITE" id="PS00599">
    <property type="entry name" value="AA_TRANSFER_CLASS_2"/>
    <property type="match status" value="1"/>
</dbReference>
<gene>
    <name type="primary">bioF</name>
</gene>